<gene>
    <name evidence="1" type="primary">HBB2</name>
</gene>
<name>HBB2_IGUIG</name>
<proteinExistence type="evidence at protein level"/>
<sequence>VHWTAEEKQLITCLWGKVDVPTVGADALAGMLVMYPWTQRFFADFGNLSSATAICGNPKVRAHGKKVLTAFGDAIKNLDNIKDTFAKLSELHCDKLHVDPENFKLLGNVLIIVLAGHYGKDFTPACHAAYQKLVNVVAHALARRYH</sequence>
<reference evidence="5" key="1">
    <citation type="journal article" date="2010" name="Mol. Biol. Evol.">
        <title>Lineage-specific patterns of functional diversification in the alpha- and beta-globin gene families of tetrapod vertebrates.</title>
        <authorList>
            <person name="Hoffmann F.G."/>
            <person name="Storz J.F."/>
            <person name="Gorr T.A."/>
            <person name="Opazo J.C."/>
        </authorList>
    </citation>
    <scope>PROTEIN SEQUENCE</scope>
    <source>
        <tissue evidence="3">Blood</tissue>
    </source>
</reference>
<keyword id="KW-0903">Direct protein sequencing</keyword>
<keyword id="KW-0349">Heme</keyword>
<keyword id="KW-0408">Iron</keyword>
<keyword id="KW-0479">Metal-binding</keyword>
<keyword id="KW-0561">Oxygen transport</keyword>
<keyword id="KW-0813">Transport</keyword>
<feature type="chain" id="PRO_0000394467" description="Hemoglobin subunit beta-2">
    <location>
        <begin position="1"/>
        <end position="146"/>
    </location>
</feature>
<feature type="domain" description="Globin" evidence="2">
    <location>
        <begin position="2"/>
        <end position="146"/>
    </location>
</feature>
<feature type="binding site" description="distal binding residue" evidence="5">
    <location>
        <position position="63"/>
    </location>
    <ligand>
        <name>heme b</name>
        <dbReference type="ChEBI" id="CHEBI:60344"/>
    </ligand>
    <ligandPart>
        <name>Fe</name>
        <dbReference type="ChEBI" id="CHEBI:18248"/>
    </ligandPart>
</feature>
<feature type="binding site" description="proximal binding residue" evidence="5">
    <location>
        <position position="92"/>
    </location>
    <ligand>
        <name>heme b</name>
        <dbReference type="ChEBI" id="CHEBI:60344"/>
    </ligand>
    <ligandPart>
        <name>Fe</name>
        <dbReference type="ChEBI" id="CHEBI:18248"/>
    </ligandPart>
</feature>
<comment type="function">
    <text evidence="5">Involved in oxygen transport from the lung to the various peripheral tissues.</text>
</comment>
<comment type="subunit">
    <text evidence="5">Heterotetramer of two alpha chains and two beta chains.</text>
</comment>
<comment type="tissue specificity">
    <text evidence="5">Red blood cells.</text>
</comment>
<comment type="similarity">
    <text evidence="2">Belongs to the globin family.</text>
</comment>
<evidence type="ECO:0000250" key="1">
    <source>
        <dbReference type="UniProtKB" id="P22743"/>
    </source>
</evidence>
<evidence type="ECO:0000255" key="2">
    <source>
        <dbReference type="PROSITE-ProRule" id="PRU00238"/>
    </source>
</evidence>
<evidence type="ECO:0000269" key="3">
    <source>
    </source>
</evidence>
<evidence type="ECO:0000303" key="4">
    <source>
    </source>
</evidence>
<evidence type="ECO:0000305" key="5"/>
<dbReference type="SMR" id="P86390"/>
<dbReference type="GO" id="GO:0072562">
    <property type="term" value="C:blood microparticle"/>
    <property type="evidence" value="ECO:0007669"/>
    <property type="project" value="TreeGrafter"/>
</dbReference>
<dbReference type="GO" id="GO:0031838">
    <property type="term" value="C:haptoglobin-hemoglobin complex"/>
    <property type="evidence" value="ECO:0007669"/>
    <property type="project" value="TreeGrafter"/>
</dbReference>
<dbReference type="GO" id="GO:0005833">
    <property type="term" value="C:hemoglobin complex"/>
    <property type="evidence" value="ECO:0007669"/>
    <property type="project" value="InterPro"/>
</dbReference>
<dbReference type="GO" id="GO:0031720">
    <property type="term" value="F:haptoglobin binding"/>
    <property type="evidence" value="ECO:0007669"/>
    <property type="project" value="TreeGrafter"/>
</dbReference>
<dbReference type="GO" id="GO:0020037">
    <property type="term" value="F:heme binding"/>
    <property type="evidence" value="ECO:0007669"/>
    <property type="project" value="InterPro"/>
</dbReference>
<dbReference type="GO" id="GO:0046872">
    <property type="term" value="F:metal ion binding"/>
    <property type="evidence" value="ECO:0007669"/>
    <property type="project" value="UniProtKB-KW"/>
</dbReference>
<dbReference type="GO" id="GO:0043177">
    <property type="term" value="F:organic acid binding"/>
    <property type="evidence" value="ECO:0007669"/>
    <property type="project" value="TreeGrafter"/>
</dbReference>
<dbReference type="GO" id="GO:0019825">
    <property type="term" value="F:oxygen binding"/>
    <property type="evidence" value="ECO:0007669"/>
    <property type="project" value="InterPro"/>
</dbReference>
<dbReference type="GO" id="GO:0005344">
    <property type="term" value="F:oxygen carrier activity"/>
    <property type="evidence" value="ECO:0007669"/>
    <property type="project" value="UniProtKB-KW"/>
</dbReference>
<dbReference type="GO" id="GO:0004601">
    <property type="term" value="F:peroxidase activity"/>
    <property type="evidence" value="ECO:0007669"/>
    <property type="project" value="TreeGrafter"/>
</dbReference>
<dbReference type="GO" id="GO:0042744">
    <property type="term" value="P:hydrogen peroxide catabolic process"/>
    <property type="evidence" value="ECO:0007669"/>
    <property type="project" value="TreeGrafter"/>
</dbReference>
<dbReference type="CDD" id="cd08925">
    <property type="entry name" value="Hb-beta-like"/>
    <property type="match status" value="1"/>
</dbReference>
<dbReference type="FunFam" id="1.10.490.10:FF:000001">
    <property type="entry name" value="Hemoglobin subunit beta"/>
    <property type="match status" value="1"/>
</dbReference>
<dbReference type="Gene3D" id="1.10.490.10">
    <property type="entry name" value="Globins"/>
    <property type="match status" value="1"/>
</dbReference>
<dbReference type="InterPro" id="IPR000971">
    <property type="entry name" value="Globin"/>
</dbReference>
<dbReference type="InterPro" id="IPR009050">
    <property type="entry name" value="Globin-like_sf"/>
</dbReference>
<dbReference type="InterPro" id="IPR012292">
    <property type="entry name" value="Globin/Proto"/>
</dbReference>
<dbReference type="InterPro" id="IPR002337">
    <property type="entry name" value="Hemoglobin_b"/>
</dbReference>
<dbReference type="InterPro" id="IPR050056">
    <property type="entry name" value="Hemoglobin_oxygen_transport"/>
</dbReference>
<dbReference type="PANTHER" id="PTHR11442">
    <property type="entry name" value="HEMOGLOBIN FAMILY MEMBER"/>
    <property type="match status" value="1"/>
</dbReference>
<dbReference type="PANTHER" id="PTHR11442:SF7">
    <property type="entry name" value="HEMOGLOBIN SUBUNIT EPSILON"/>
    <property type="match status" value="1"/>
</dbReference>
<dbReference type="Pfam" id="PF00042">
    <property type="entry name" value="Globin"/>
    <property type="match status" value="1"/>
</dbReference>
<dbReference type="PRINTS" id="PR00814">
    <property type="entry name" value="BETAHAEM"/>
</dbReference>
<dbReference type="SUPFAM" id="SSF46458">
    <property type="entry name" value="Globin-like"/>
    <property type="match status" value="1"/>
</dbReference>
<dbReference type="PROSITE" id="PS01033">
    <property type="entry name" value="GLOBIN"/>
    <property type="match status" value="1"/>
</dbReference>
<protein>
    <recommendedName>
        <fullName evidence="1">Hemoglobin subunit beta-2</fullName>
    </recommendedName>
    <alternativeName>
        <fullName evidence="1">Beta-2-globin</fullName>
    </alternativeName>
    <alternativeName>
        <fullName evidence="1">Hemoglobin beta-2 chain</fullName>
    </alternativeName>
    <alternativeName>
        <fullName evidence="1 4">Hemoglobin beta-II chain</fullName>
    </alternativeName>
</protein>
<accession>P86390</accession>
<organism>
    <name type="scientific">Iguana iguana</name>
    <name type="common">Common iguana</name>
    <dbReference type="NCBI Taxonomy" id="8517"/>
    <lineage>
        <taxon>Eukaryota</taxon>
        <taxon>Metazoa</taxon>
        <taxon>Chordata</taxon>
        <taxon>Craniata</taxon>
        <taxon>Vertebrata</taxon>
        <taxon>Euteleostomi</taxon>
        <taxon>Lepidosauria</taxon>
        <taxon>Squamata</taxon>
        <taxon>Bifurcata</taxon>
        <taxon>Unidentata</taxon>
        <taxon>Episquamata</taxon>
        <taxon>Toxicofera</taxon>
        <taxon>Iguania</taxon>
        <taxon>Iguanidae</taxon>
        <taxon>Iguaninae</taxon>
        <taxon>Iguana</taxon>
    </lineage>
</organism>